<reference key="1">
    <citation type="journal article" date="1990" name="J. Gen. Virol.">
        <title>Porcine respiratory coronavirus differs from transmissible gastroenteritis virus by a few genomic deletions.</title>
        <authorList>
            <person name="Rasschaert D."/>
            <person name="Duarte M."/>
            <person name="Laude H."/>
        </authorList>
    </citation>
    <scope>NUCLEOTIDE SEQUENCE [GENOMIC RNA]</scope>
</reference>
<proteinExistence type="inferred from homology"/>
<evidence type="ECO:0000255" key="1"/>
<evidence type="ECO:0000305" key="2"/>
<organism>
    <name type="scientific">Porcine respiratory coronavirus (strain RM4)</name>
    <name type="common">PRCoV</name>
    <name type="synonym">PRCV</name>
    <dbReference type="NCBI Taxonomy" id="11148"/>
    <lineage>
        <taxon>Viruses</taxon>
        <taxon>Riboviria</taxon>
        <taxon>Orthornavirae</taxon>
        <taxon>Pisuviricota</taxon>
        <taxon>Pisoniviricetes</taxon>
        <taxon>Nidovirales</taxon>
        <taxon>Cornidovirineae</taxon>
        <taxon>Coronaviridae</taxon>
        <taxon>Orthocoronavirinae</taxon>
        <taxon>Alphacoronavirus</taxon>
        <taxon>Tegacovirus</taxon>
        <taxon>Alphacoronavirus 1</taxon>
    </lineage>
</organism>
<sequence>MLVLLQAVCITVLTLLLIGRLQLLERLLLNHSFNLKTVDDFNILYRSLAETRLLKVVLRLIFLVLLGFCCYRLLVILM</sequence>
<dbReference type="EMBL" id="Z24675">
    <property type="protein sequence ID" value="CAA80842.1"/>
    <property type="molecule type" value="Genomic_RNA"/>
</dbReference>
<dbReference type="GO" id="GO:0033644">
    <property type="term" value="C:host cell membrane"/>
    <property type="evidence" value="ECO:0007669"/>
    <property type="project" value="UniProtKB-SubCell"/>
</dbReference>
<dbReference type="GO" id="GO:0016020">
    <property type="term" value="C:membrane"/>
    <property type="evidence" value="ECO:0007669"/>
    <property type="project" value="UniProtKB-KW"/>
</dbReference>
<dbReference type="InterPro" id="IPR003449">
    <property type="entry name" value="Corona_7"/>
</dbReference>
<dbReference type="Pfam" id="PF02398">
    <property type="entry name" value="Corona_7"/>
    <property type="match status" value="2"/>
</dbReference>
<keyword id="KW-1043">Host membrane</keyword>
<keyword id="KW-0472">Membrane</keyword>
<keyword id="KW-0732">Signal</keyword>
<keyword id="KW-0812">Transmembrane</keyword>
<keyword id="KW-1133">Transmembrane helix</keyword>
<protein>
    <recommendedName>
        <fullName>Non-structural protein 7</fullName>
        <shortName>ns7</shortName>
    </recommendedName>
    <alternativeName>
        <fullName>9 kDa hydrophobic protein</fullName>
        <shortName>HP</shortName>
    </alternativeName>
    <alternativeName>
        <fullName>Accessory protein 7</fullName>
    </alternativeName>
    <alternativeName>
        <fullName>X3 protein</fullName>
    </alternativeName>
</protein>
<comment type="function">
    <text>May function in the formation of membrane-bound replication complexes or in the assembly of the virus.</text>
</comment>
<comment type="subcellular location">
    <subcellularLocation>
        <location evidence="2">Host membrane</location>
        <topology evidence="2">Single-pass membrane protein</topology>
    </subcellularLocation>
</comment>
<comment type="similarity">
    <text evidence="2">Belongs to the coronaviruses ns7/ns7a protein family.</text>
</comment>
<gene>
    <name type="ORF">7</name>
</gene>
<organismHost>
    <name type="scientific">Sus scrofa</name>
    <name type="common">Pig</name>
    <dbReference type="NCBI Taxonomy" id="9823"/>
</organismHost>
<feature type="signal peptide" evidence="1">
    <location>
        <begin position="1"/>
        <end position="23"/>
    </location>
</feature>
<feature type="chain" id="PRO_0000106101" description="Non-structural protein 7">
    <location>
        <begin position="24"/>
        <end position="78"/>
    </location>
</feature>
<feature type="transmembrane region" description="Helical" evidence="1">
    <location>
        <begin position="56"/>
        <end position="76"/>
    </location>
</feature>
<accession>P69613</accession>
<accession>P24416</accession>
<accession>P33466</accession>
<name>NS7_CVPRM</name>